<accession>Q5WIE4</accession>
<organism>
    <name type="scientific">Shouchella clausii (strain KSM-K16)</name>
    <name type="common">Alkalihalobacillus clausii</name>
    <dbReference type="NCBI Taxonomy" id="66692"/>
    <lineage>
        <taxon>Bacteria</taxon>
        <taxon>Bacillati</taxon>
        <taxon>Bacillota</taxon>
        <taxon>Bacilli</taxon>
        <taxon>Bacillales</taxon>
        <taxon>Bacillaceae</taxon>
        <taxon>Shouchella</taxon>
    </lineage>
</organism>
<evidence type="ECO:0000255" key="1">
    <source>
        <dbReference type="HAMAP-Rule" id="MF_01502"/>
    </source>
</evidence>
<proteinExistence type="inferred from homology"/>
<reference key="1">
    <citation type="submission" date="2003-10" db="EMBL/GenBank/DDBJ databases">
        <title>The complete genome sequence of the alkaliphilic Bacillus clausii KSM-K16.</title>
        <authorList>
            <person name="Takaki Y."/>
            <person name="Kageyama Y."/>
            <person name="Shimamura S."/>
            <person name="Suzuki H."/>
            <person name="Nishi S."/>
            <person name="Hatada Y."/>
            <person name="Kawai S."/>
            <person name="Ito S."/>
            <person name="Horikoshi K."/>
        </authorList>
    </citation>
    <scope>NUCLEOTIDE SEQUENCE [LARGE SCALE GENOMIC DNA]</scope>
    <source>
        <strain>KSM-K16</strain>
    </source>
</reference>
<keyword id="KW-1003">Cell membrane</keyword>
<keyword id="KW-0472">Membrane</keyword>
<keyword id="KW-1185">Reference proteome</keyword>
<keyword id="KW-0812">Transmembrane</keyword>
<keyword id="KW-1133">Transmembrane helix</keyword>
<comment type="subcellular location">
    <subcellularLocation>
        <location evidence="1">Cell membrane</location>
        <topology evidence="1">Multi-pass membrane protein</topology>
    </subcellularLocation>
</comment>
<comment type="similarity">
    <text evidence="1">Belongs to the UPF0295 family.</text>
</comment>
<dbReference type="EMBL" id="AP006627">
    <property type="protein sequence ID" value="BAD63861.1"/>
    <property type="molecule type" value="Genomic_DNA"/>
</dbReference>
<dbReference type="RefSeq" id="WP_011246174.1">
    <property type="nucleotide sequence ID" value="NC_006582.1"/>
</dbReference>
<dbReference type="SMR" id="Q5WIE4"/>
<dbReference type="STRING" id="66692.ABC1323"/>
<dbReference type="KEGG" id="bcl:ABC1323"/>
<dbReference type="eggNOG" id="ENOG50313Y4">
    <property type="taxonomic scope" value="Bacteria"/>
</dbReference>
<dbReference type="HOGENOM" id="CLU_143991_0_0_9"/>
<dbReference type="OrthoDB" id="1653848at2"/>
<dbReference type="Proteomes" id="UP000001168">
    <property type="component" value="Chromosome"/>
</dbReference>
<dbReference type="GO" id="GO:0005886">
    <property type="term" value="C:plasma membrane"/>
    <property type="evidence" value="ECO:0007669"/>
    <property type="project" value="UniProtKB-SubCell"/>
</dbReference>
<dbReference type="HAMAP" id="MF_01502">
    <property type="entry name" value="UPF0295"/>
    <property type="match status" value="1"/>
</dbReference>
<dbReference type="InterPro" id="IPR020912">
    <property type="entry name" value="UPF0295"/>
</dbReference>
<dbReference type="NCBIfam" id="NF002796">
    <property type="entry name" value="PRK02935.1"/>
    <property type="match status" value="1"/>
</dbReference>
<dbReference type="Pfam" id="PF11023">
    <property type="entry name" value="DUF2614"/>
    <property type="match status" value="1"/>
</dbReference>
<gene>
    <name type="ordered locus">ABC1323</name>
</gene>
<name>Y1323_SHOC1</name>
<protein>
    <recommendedName>
        <fullName evidence="1">UPF0295 protein ABC1323</fullName>
    </recommendedName>
</protein>
<feature type="chain" id="PRO_0000053854" description="UPF0295 protein ABC1323">
    <location>
        <begin position="1"/>
        <end position="121"/>
    </location>
</feature>
<feature type="transmembrane region" description="Helical" evidence="1">
    <location>
        <begin position="14"/>
        <end position="34"/>
    </location>
</feature>
<feature type="transmembrane region" description="Helical" evidence="1">
    <location>
        <begin position="41"/>
        <end position="61"/>
    </location>
</feature>
<sequence>MKLKYTNKINKIRTFALSLVFVGILIMYVGIFFKEHPVIMVIAMILGFLAVIASTVVYFFIGLLSTRAVPVICPSCEKQTKVLGRVDACMHCDQPLTMDRSLEGKEFDEAYNSPASKKSQT</sequence>